<comment type="function">
    <text evidence="1">Specifically dimethylates two adjacent adenosines (A1518 and A1519) in the loop of a conserved hairpin near the 3'-end of 16S rRNA in the 30S particle. May play a critical role in biogenesis of 30S subunits.</text>
</comment>
<comment type="catalytic activity">
    <reaction evidence="1">
        <text>adenosine(1518)/adenosine(1519) in 16S rRNA + 4 S-adenosyl-L-methionine = N(6)-dimethyladenosine(1518)/N(6)-dimethyladenosine(1519) in 16S rRNA + 4 S-adenosyl-L-homocysteine + 4 H(+)</text>
        <dbReference type="Rhea" id="RHEA:19609"/>
        <dbReference type="Rhea" id="RHEA-COMP:10232"/>
        <dbReference type="Rhea" id="RHEA-COMP:10233"/>
        <dbReference type="ChEBI" id="CHEBI:15378"/>
        <dbReference type="ChEBI" id="CHEBI:57856"/>
        <dbReference type="ChEBI" id="CHEBI:59789"/>
        <dbReference type="ChEBI" id="CHEBI:74411"/>
        <dbReference type="ChEBI" id="CHEBI:74493"/>
        <dbReference type="EC" id="2.1.1.182"/>
    </reaction>
</comment>
<comment type="subcellular location">
    <subcellularLocation>
        <location evidence="1">Cytoplasm</location>
    </subcellularLocation>
</comment>
<comment type="similarity">
    <text evidence="1">Belongs to the class I-like SAM-binding methyltransferase superfamily. rRNA adenine N(6)-methyltransferase family. RsmA subfamily.</text>
</comment>
<name>RSMA_PSEU2</name>
<gene>
    <name evidence="1" type="primary">rsmA</name>
    <name evidence="1" type="synonym">ksgA</name>
    <name type="ordered locus">Psyr_4627</name>
</gene>
<protein>
    <recommendedName>
        <fullName evidence="1">Ribosomal RNA small subunit methyltransferase A</fullName>
        <ecNumber evidence="1">2.1.1.182</ecNumber>
    </recommendedName>
    <alternativeName>
        <fullName evidence="1">16S rRNA (adenine(1518)-N(6)/adenine(1519)-N(6))-dimethyltransferase</fullName>
    </alternativeName>
    <alternativeName>
        <fullName evidence="1">16S rRNA dimethyladenosine transferase</fullName>
    </alternativeName>
    <alternativeName>
        <fullName evidence="1">16S rRNA dimethylase</fullName>
    </alternativeName>
    <alternativeName>
        <fullName evidence="1">S-adenosylmethionine-6-N', N'-adenosyl(rRNA) dimethyltransferase</fullName>
    </alternativeName>
</protein>
<proteinExistence type="inferred from homology"/>
<organism>
    <name type="scientific">Pseudomonas syringae pv. syringae (strain B728a)</name>
    <dbReference type="NCBI Taxonomy" id="205918"/>
    <lineage>
        <taxon>Bacteria</taxon>
        <taxon>Pseudomonadati</taxon>
        <taxon>Pseudomonadota</taxon>
        <taxon>Gammaproteobacteria</taxon>
        <taxon>Pseudomonadales</taxon>
        <taxon>Pseudomonadaceae</taxon>
        <taxon>Pseudomonas</taxon>
        <taxon>Pseudomonas syringae</taxon>
    </lineage>
</organism>
<reference key="1">
    <citation type="journal article" date="2005" name="Proc. Natl. Acad. Sci. U.S.A.">
        <title>Comparison of the complete genome sequences of Pseudomonas syringae pv. syringae B728a and pv. tomato DC3000.</title>
        <authorList>
            <person name="Feil H."/>
            <person name="Feil W.S."/>
            <person name="Chain P."/>
            <person name="Larimer F."/>
            <person name="Dibartolo G."/>
            <person name="Copeland A."/>
            <person name="Lykidis A."/>
            <person name="Trong S."/>
            <person name="Nolan M."/>
            <person name="Goltsman E."/>
            <person name="Thiel J."/>
            <person name="Malfatti S."/>
            <person name="Loper J.E."/>
            <person name="Lapidus A."/>
            <person name="Detter J.C."/>
            <person name="Land M."/>
            <person name="Richardson P.M."/>
            <person name="Kyrpides N.C."/>
            <person name="Ivanova N."/>
            <person name="Lindow S.E."/>
        </authorList>
    </citation>
    <scope>NUCLEOTIDE SEQUENCE [LARGE SCALE GENOMIC DNA]</scope>
    <source>
        <strain>B728a</strain>
    </source>
</reference>
<keyword id="KW-0963">Cytoplasm</keyword>
<keyword id="KW-0489">Methyltransferase</keyword>
<keyword id="KW-0694">RNA-binding</keyword>
<keyword id="KW-0698">rRNA processing</keyword>
<keyword id="KW-0949">S-adenosyl-L-methionine</keyword>
<keyword id="KW-0808">Transferase</keyword>
<dbReference type="EC" id="2.1.1.182" evidence="1"/>
<dbReference type="EMBL" id="CP000075">
    <property type="protein sequence ID" value="AAY39657.1"/>
    <property type="molecule type" value="Genomic_DNA"/>
</dbReference>
<dbReference type="RefSeq" id="WP_011269133.1">
    <property type="nucleotide sequence ID" value="NC_007005.1"/>
</dbReference>
<dbReference type="RefSeq" id="YP_237695.1">
    <property type="nucleotide sequence ID" value="NC_007005.1"/>
</dbReference>
<dbReference type="SMR" id="Q4ZMG5"/>
<dbReference type="STRING" id="205918.Psyr_4627"/>
<dbReference type="KEGG" id="psb:Psyr_4627"/>
<dbReference type="PATRIC" id="fig|205918.7.peg.4772"/>
<dbReference type="eggNOG" id="COG0030">
    <property type="taxonomic scope" value="Bacteria"/>
</dbReference>
<dbReference type="HOGENOM" id="CLU_041220_0_1_6"/>
<dbReference type="OrthoDB" id="9814755at2"/>
<dbReference type="Proteomes" id="UP000000426">
    <property type="component" value="Chromosome"/>
</dbReference>
<dbReference type="GO" id="GO:0005829">
    <property type="term" value="C:cytosol"/>
    <property type="evidence" value="ECO:0007669"/>
    <property type="project" value="TreeGrafter"/>
</dbReference>
<dbReference type="GO" id="GO:0052908">
    <property type="term" value="F:16S rRNA (adenine(1518)-N(6)/adenine(1519)-N(6))-dimethyltransferase activity"/>
    <property type="evidence" value="ECO:0007669"/>
    <property type="project" value="UniProtKB-EC"/>
</dbReference>
<dbReference type="GO" id="GO:0003723">
    <property type="term" value="F:RNA binding"/>
    <property type="evidence" value="ECO:0007669"/>
    <property type="project" value="UniProtKB-KW"/>
</dbReference>
<dbReference type="FunFam" id="1.10.8.100:FF:000001">
    <property type="entry name" value="Ribosomal RNA small subunit methyltransferase A"/>
    <property type="match status" value="1"/>
</dbReference>
<dbReference type="Gene3D" id="1.10.8.100">
    <property type="entry name" value="Ribosomal RNA adenine dimethylase-like, domain 2"/>
    <property type="match status" value="1"/>
</dbReference>
<dbReference type="Gene3D" id="3.40.50.150">
    <property type="entry name" value="Vaccinia Virus protein VP39"/>
    <property type="match status" value="1"/>
</dbReference>
<dbReference type="HAMAP" id="MF_00607">
    <property type="entry name" value="16SrRNA_methyltr_A"/>
    <property type="match status" value="1"/>
</dbReference>
<dbReference type="InterPro" id="IPR001737">
    <property type="entry name" value="KsgA/Erm"/>
</dbReference>
<dbReference type="InterPro" id="IPR023165">
    <property type="entry name" value="rRNA_Ade_diMease-like_C"/>
</dbReference>
<dbReference type="InterPro" id="IPR020596">
    <property type="entry name" value="rRNA_Ade_Mease_Trfase_CS"/>
</dbReference>
<dbReference type="InterPro" id="IPR020598">
    <property type="entry name" value="rRNA_Ade_methylase_Trfase_N"/>
</dbReference>
<dbReference type="InterPro" id="IPR011530">
    <property type="entry name" value="rRNA_adenine_dimethylase"/>
</dbReference>
<dbReference type="InterPro" id="IPR029063">
    <property type="entry name" value="SAM-dependent_MTases_sf"/>
</dbReference>
<dbReference type="NCBIfam" id="TIGR00755">
    <property type="entry name" value="ksgA"/>
    <property type="match status" value="1"/>
</dbReference>
<dbReference type="PANTHER" id="PTHR11727">
    <property type="entry name" value="DIMETHYLADENOSINE TRANSFERASE"/>
    <property type="match status" value="1"/>
</dbReference>
<dbReference type="PANTHER" id="PTHR11727:SF7">
    <property type="entry name" value="DIMETHYLADENOSINE TRANSFERASE-RELATED"/>
    <property type="match status" value="1"/>
</dbReference>
<dbReference type="Pfam" id="PF00398">
    <property type="entry name" value="RrnaAD"/>
    <property type="match status" value="1"/>
</dbReference>
<dbReference type="SMART" id="SM00650">
    <property type="entry name" value="rADc"/>
    <property type="match status" value="1"/>
</dbReference>
<dbReference type="SUPFAM" id="SSF53335">
    <property type="entry name" value="S-adenosyl-L-methionine-dependent methyltransferases"/>
    <property type="match status" value="1"/>
</dbReference>
<dbReference type="PROSITE" id="PS01131">
    <property type="entry name" value="RRNA_A_DIMETH"/>
    <property type="match status" value="1"/>
</dbReference>
<dbReference type="PROSITE" id="PS51689">
    <property type="entry name" value="SAM_RNA_A_N6_MT"/>
    <property type="match status" value="1"/>
</dbReference>
<feature type="chain" id="PRO_0000257325" description="Ribosomal RNA small subunit methyltransferase A">
    <location>
        <begin position="1"/>
        <end position="268"/>
    </location>
</feature>
<feature type="binding site" evidence="1">
    <location>
        <position position="16"/>
    </location>
    <ligand>
        <name>S-adenosyl-L-methionine</name>
        <dbReference type="ChEBI" id="CHEBI:59789"/>
    </ligand>
</feature>
<feature type="binding site" evidence="1">
    <location>
        <position position="18"/>
    </location>
    <ligand>
        <name>S-adenosyl-L-methionine</name>
        <dbReference type="ChEBI" id="CHEBI:59789"/>
    </ligand>
</feature>
<feature type="binding site" evidence="1">
    <location>
        <position position="43"/>
    </location>
    <ligand>
        <name>S-adenosyl-L-methionine</name>
        <dbReference type="ChEBI" id="CHEBI:59789"/>
    </ligand>
</feature>
<feature type="binding site" evidence="1">
    <location>
        <position position="64"/>
    </location>
    <ligand>
        <name>S-adenosyl-L-methionine</name>
        <dbReference type="ChEBI" id="CHEBI:59789"/>
    </ligand>
</feature>
<feature type="binding site" evidence="1">
    <location>
        <position position="89"/>
    </location>
    <ligand>
        <name>S-adenosyl-L-methionine</name>
        <dbReference type="ChEBI" id="CHEBI:59789"/>
    </ligand>
</feature>
<feature type="binding site" evidence="1">
    <location>
        <position position="110"/>
    </location>
    <ligand>
        <name>S-adenosyl-L-methionine</name>
        <dbReference type="ChEBI" id="CHEBI:59789"/>
    </ligand>
</feature>
<accession>Q4ZMG5</accession>
<evidence type="ECO:0000255" key="1">
    <source>
        <dbReference type="HAMAP-Rule" id="MF_00607"/>
    </source>
</evidence>
<sequence length="268" mass="29992">MTEQYQHRARKRFGQNFLHDAGVIDKILRAIRARPEDRLLEIGPGQGALTEGLLDSGAQLDVVELDKDLIPILNGQFASKPNFNLHQGDALKFDFNTLGADPRSLRVVGNLPYNISTPLIFHLLQNASLIRDMHFMLQKEVVERMAAGPGGGDWGRLSIMVQYHCRVEHLFNVGPGAFNPPPKVDSAIVRLVPYETLPHPAKDHRVLERIVREAFNQRRKTLRNTLKLLLTSDEITASGVDGSLRPEQLDLAAFVRLADTLSEKVVTE</sequence>